<sequence>MSNSGNIKLINIGFGNIVSANRLIAIVSPDSAPIKRIIQEARERGMLIDATYGRRTRAVIITDSDHVILSAVQPETVAHRVIEPEEDFEEDIDVEDEVDKR</sequence>
<organism>
    <name type="scientific">Caldicellulosiruptor saccharolyticus (strain ATCC 43494 / DSM 8903 / Tp8T 6331)</name>
    <dbReference type="NCBI Taxonomy" id="351627"/>
    <lineage>
        <taxon>Bacteria</taxon>
        <taxon>Bacillati</taxon>
        <taxon>Bacillota</taxon>
        <taxon>Bacillota incertae sedis</taxon>
        <taxon>Caldicellulosiruptorales</taxon>
        <taxon>Caldicellulosiruptoraceae</taxon>
        <taxon>Caldicellulosiruptor</taxon>
    </lineage>
</organism>
<evidence type="ECO:0000255" key="1">
    <source>
        <dbReference type="HAMAP-Rule" id="MF_01503"/>
    </source>
</evidence>
<name>Y2087_CALS8</name>
<gene>
    <name type="ordered locus">Csac_2087</name>
</gene>
<comment type="similarity">
    <text evidence="1">Belongs to the RemA family.</text>
</comment>
<accession>A4XL87</accession>
<proteinExistence type="inferred from homology"/>
<dbReference type="EMBL" id="CP000679">
    <property type="protein sequence ID" value="ABP67672.1"/>
    <property type="molecule type" value="Genomic_DNA"/>
</dbReference>
<dbReference type="SMR" id="A4XL87"/>
<dbReference type="STRING" id="351627.Csac_2087"/>
<dbReference type="KEGG" id="csc:Csac_2087"/>
<dbReference type="eggNOG" id="COG2052">
    <property type="taxonomic scope" value="Bacteria"/>
</dbReference>
<dbReference type="HOGENOM" id="CLU_165326_0_0_9"/>
<dbReference type="Proteomes" id="UP000000256">
    <property type="component" value="Chromosome"/>
</dbReference>
<dbReference type="HAMAP" id="MF_01503">
    <property type="entry name" value="RemA"/>
    <property type="match status" value="1"/>
</dbReference>
<dbReference type="InterPro" id="IPR007169">
    <property type="entry name" value="RemA-like"/>
</dbReference>
<dbReference type="NCBIfam" id="NF046064">
    <property type="entry name" value="MtxBflmRegRemA"/>
    <property type="match status" value="1"/>
</dbReference>
<dbReference type="NCBIfam" id="NF003315">
    <property type="entry name" value="PRK04323.1"/>
    <property type="match status" value="1"/>
</dbReference>
<dbReference type="PANTHER" id="PTHR38449:SF1">
    <property type="entry name" value="REGULATORY PROTEIN SSL2874-RELATED"/>
    <property type="match status" value="1"/>
</dbReference>
<dbReference type="PANTHER" id="PTHR38449">
    <property type="entry name" value="REGULATORY PROTEIN TM_1690-RELATED"/>
    <property type="match status" value="1"/>
</dbReference>
<dbReference type="Pfam" id="PF04025">
    <property type="entry name" value="RemA-like"/>
    <property type="match status" value="1"/>
</dbReference>
<protein>
    <recommendedName>
        <fullName evidence="1">Putative regulatory protein Csac_2087</fullName>
    </recommendedName>
</protein>
<reference key="1">
    <citation type="submission" date="2007-04" db="EMBL/GenBank/DDBJ databases">
        <title>Genome sequence of the thermophilic hydrogen-producing bacterium Caldicellulosiruptor saccharolyticus DSM 8903.</title>
        <authorList>
            <person name="Copeland A."/>
            <person name="Lucas S."/>
            <person name="Lapidus A."/>
            <person name="Barry K."/>
            <person name="Detter J.C."/>
            <person name="Glavina del Rio T."/>
            <person name="Hammon N."/>
            <person name="Israni S."/>
            <person name="Dalin E."/>
            <person name="Tice H."/>
            <person name="Pitluck S."/>
            <person name="Kiss H."/>
            <person name="Brettin T."/>
            <person name="Bruce D."/>
            <person name="Han C."/>
            <person name="Schmutz J."/>
            <person name="Larimer F."/>
            <person name="Land M."/>
            <person name="Hauser L."/>
            <person name="Kyrpides N."/>
            <person name="Lykidis A."/>
            <person name="van de Werken H.J.G."/>
            <person name="Verhaart M.R.A."/>
            <person name="VanFossen A.L."/>
            <person name="Lewis D.L."/>
            <person name="Nichols J.D."/>
            <person name="Goorissen H.P."/>
            <person name="van Niel E.W.J."/>
            <person name="Stams F.J.M."/>
            <person name="Willquist K.U."/>
            <person name="Ward D.E."/>
            <person name="van der Oost J."/>
            <person name="Kelly R.M."/>
            <person name="Kengen S.M.W."/>
            <person name="Richardson P."/>
        </authorList>
    </citation>
    <scope>NUCLEOTIDE SEQUENCE [LARGE SCALE GENOMIC DNA]</scope>
    <source>
        <strain>ATCC 43494 / DSM 8903 / Tp8T 6331</strain>
    </source>
</reference>
<feature type="chain" id="PRO_0000315203" description="Putative regulatory protein Csac_2087">
    <location>
        <begin position="1"/>
        <end position="101"/>
    </location>
</feature>